<name>PCP1_STRPN</name>
<comment type="function">
    <text evidence="1">Removes 5-oxoproline from various penultimate amino acid residues except L-proline.</text>
</comment>
<comment type="catalytic activity">
    <reaction evidence="1">
        <text>Release of an N-terminal pyroglutamyl group from a polypeptide, the second amino acid generally not being Pro.</text>
        <dbReference type="EC" id="3.4.19.3"/>
    </reaction>
</comment>
<comment type="subunit">
    <text evidence="1">Homotetramer.</text>
</comment>
<comment type="subcellular location">
    <subcellularLocation>
        <location evidence="1">Cytoplasm</location>
    </subcellularLocation>
</comment>
<comment type="similarity">
    <text evidence="1">Belongs to the peptidase C15 family.</text>
</comment>
<proteinExistence type="inferred from homology"/>
<reference key="1">
    <citation type="journal article" date="2001" name="Science">
        <title>Complete genome sequence of a virulent isolate of Streptococcus pneumoniae.</title>
        <authorList>
            <person name="Tettelin H."/>
            <person name="Nelson K.E."/>
            <person name="Paulsen I.T."/>
            <person name="Eisen J.A."/>
            <person name="Read T.D."/>
            <person name="Peterson S.N."/>
            <person name="Heidelberg J.F."/>
            <person name="DeBoy R.T."/>
            <person name="Haft D.H."/>
            <person name="Dodson R.J."/>
            <person name="Durkin A.S."/>
            <person name="Gwinn M.L."/>
            <person name="Kolonay J.F."/>
            <person name="Nelson W.C."/>
            <person name="Peterson J.D."/>
            <person name="Umayam L.A."/>
            <person name="White O."/>
            <person name="Salzberg S.L."/>
            <person name="Lewis M.R."/>
            <person name="Radune D."/>
            <person name="Holtzapple E.K."/>
            <person name="Khouri H.M."/>
            <person name="Wolf A.M."/>
            <person name="Utterback T.R."/>
            <person name="Hansen C.L."/>
            <person name="McDonald L.A."/>
            <person name="Feldblyum T.V."/>
            <person name="Angiuoli S.V."/>
            <person name="Dickinson T."/>
            <person name="Hickey E.K."/>
            <person name="Holt I.E."/>
            <person name="Loftus B.J."/>
            <person name="Yang F."/>
            <person name="Smith H.O."/>
            <person name="Venter J.C."/>
            <person name="Dougherty B.A."/>
            <person name="Morrison D.A."/>
            <person name="Hollingshead S.K."/>
            <person name="Fraser C.M."/>
        </authorList>
    </citation>
    <scope>NUCLEOTIDE SEQUENCE [LARGE SCALE GENOMIC DNA]</scope>
    <source>
        <strain>ATCC BAA-334 / TIGR4</strain>
    </source>
</reference>
<dbReference type="EC" id="3.4.19.3" evidence="1"/>
<dbReference type="EMBL" id="AE005672">
    <property type="protein sequence ID" value="AAK74988.1"/>
    <property type="molecule type" value="Genomic_DNA"/>
</dbReference>
<dbReference type="PIR" id="C95099">
    <property type="entry name" value="C95099"/>
</dbReference>
<dbReference type="RefSeq" id="WP_000699369.1">
    <property type="nucleotide sequence ID" value="NZ_CP155539.1"/>
</dbReference>
<dbReference type="SMR" id="P65678"/>
<dbReference type="MEROPS" id="C15.001"/>
<dbReference type="PaxDb" id="170187-SP_0860"/>
<dbReference type="EnsemblBacteria" id="AAK74988">
    <property type="protein sequence ID" value="AAK74988"/>
    <property type="gene ID" value="SP_0860"/>
</dbReference>
<dbReference type="GeneID" id="45653786"/>
<dbReference type="KEGG" id="spn:SP_0860"/>
<dbReference type="eggNOG" id="COG2039">
    <property type="taxonomic scope" value="Bacteria"/>
</dbReference>
<dbReference type="PhylomeDB" id="P65678"/>
<dbReference type="BioCyc" id="SPNE170187:G1FZB-878-MONOMER"/>
<dbReference type="Proteomes" id="UP000000585">
    <property type="component" value="Chromosome"/>
</dbReference>
<dbReference type="GO" id="GO:0005829">
    <property type="term" value="C:cytosol"/>
    <property type="evidence" value="ECO:0007669"/>
    <property type="project" value="InterPro"/>
</dbReference>
<dbReference type="GO" id="GO:0016920">
    <property type="term" value="F:pyroglutamyl-peptidase activity"/>
    <property type="evidence" value="ECO:0007669"/>
    <property type="project" value="UniProtKB-UniRule"/>
</dbReference>
<dbReference type="GO" id="GO:0006508">
    <property type="term" value="P:proteolysis"/>
    <property type="evidence" value="ECO:0007669"/>
    <property type="project" value="UniProtKB-KW"/>
</dbReference>
<dbReference type="CDD" id="cd00501">
    <property type="entry name" value="Peptidase_C15"/>
    <property type="match status" value="1"/>
</dbReference>
<dbReference type="FunFam" id="3.40.630.20:FF:000001">
    <property type="entry name" value="Pyrrolidone-carboxylate peptidase"/>
    <property type="match status" value="1"/>
</dbReference>
<dbReference type="Gene3D" id="3.40.630.20">
    <property type="entry name" value="Peptidase C15, pyroglutamyl peptidase I-like"/>
    <property type="match status" value="1"/>
</dbReference>
<dbReference type="HAMAP" id="MF_00417">
    <property type="entry name" value="Pyrrolid_peptidase"/>
    <property type="match status" value="1"/>
</dbReference>
<dbReference type="InterPro" id="IPR000816">
    <property type="entry name" value="Peptidase_C15"/>
</dbReference>
<dbReference type="InterPro" id="IPR016125">
    <property type="entry name" value="Peptidase_C15-like"/>
</dbReference>
<dbReference type="InterPro" id="IPR036440">
    <property type="entry name" value="Peptidase_C15-like_sf"/>
</dbReference>
<dbReference type="InterPro" id="IPR029762">
    <property type="entry name" value="PGP-I_bact-type"/>
</dbReference>
<dbReference type="InterPro" id="IPR033694">
    <property type="entry name" value="PGPEP1_Cys_AS"/>
</dbReference>
<dbReference type="InterPro" id="IPR033693">
    <property type="entry name" value="PGPEP1_Glu_AS"/>
</dbReference>
<dbReference type="NCBIfam" id="NF009676">
    <property type="entry name" value="PRK13197.1"/>
    <property type="match status" value="1"/>
</dbReference>
<dbReference type="NCBIfam" id="TIGR00504">
    <property type="entry name" value="pyro_pdase"/>
    <property type="match status" value="1"/>
</dbReference>
<dbReference type="PANTHER" id="PTHR23402">
    <property type="entry name" value="PROTEASE FAMILY C15 PYROGLUTAMYL-PEPTIDASE I-RELATED"/>
    <property type="match status" value="1"/>
</dbReference>
<dbReference type="PANTHER" id="PTHR23402:SF1">
    <property type="entry name" value="PYROGLUTAMYL-PEPTIDASE I"/>
    <property type="match status" value="1"/>
</dbReference>
<dbReference type="Pfam" id="PF01470">
    <property type="entry name" value="Peptidase_C15"/>
    <property type="match status" value="1"/>
</dbReference>
<dbReference type="PIRSF" id="PIRSF015592">
    <property type="entry name" value="Prld-crbxl_pptds"/>
    <property type="match status" value="1"/>
</dbReference>
<dbReference type="PRINTS" id="PR00706">
    <property type="entry name" value="PYROGLUPTASE"/>
</dbReference>
<dbReference type="SUPFAM" id="SSF53182">
    <property type="entry name" value="Pyrrolidone carboxyl peptidase (pyroglutamate aminopeptidase)"/>
    <property type="match status" value="1"/>
</dbReference>
<dbReference type="PROSITE" id="PS01334">
    <property type="entry name" value="PYRASE_CYS"/>
    <property type="match status" value="1"/>
</dbReference>
<dbReference type="PROSITE" id="PS01333">
    <property type="entry name" value="PYRASE_GLU"/>
    <property type="match status" value="1"/>
</dbReference>
<protein>
    <recommendedName>
        <fullName evidence="1">Pyrrolidone-carboxylate peptidase 1</fullName>
        <ecNumber evidence="1">3.4.19.3</ecNumber>
    </recommendedName>
    <alternativeName>
        <fullName evidence="1">5-oxoprolyl-peptidase 1</fullName>
    </alternativeName>
    <alternativeName>
        <fullName evidence="1">Pyroglutamyl-peptidase I 1</fullName>
        <shortName evidence="1">PGP-I 1</shortName>
        <shortName evidence="1">Pyrase 1</shortName>
    </alternativeName>
</protein>
<sequence>MKILVTGFNPFGGEKINPALEAVKLLPSEINGAEVRWVEIPTVFYKSSEVLEAEILRYQPDAVLCIGQAGGRTGLTPERVAINQDDARIPDNEGNQPIDTPIRIDGASAYFSSLPIKAMVQAIKKQGLPAVVSNSAGTFVCNHLMYQALYLVDKKFPNMRAGFMHIPYMMEQVVNKPNTAGMSLCDIVRGIEVAIEAIVDYKDKDLQLVGGETH</sequence>
<organism>
    <name type="scientific">Streptococcus pneumoniae serotype 4 (strain ATCC BAA-334 / TIGR4)</name>
    <dbReference type="NCBI Taxonomy" id="170187"/>
    <lineage>
        <taxon>Bacteria</taxon>
        <taxon>Bacillati</taxon>
        <taxon>Bacillota</taxon>
        <taxon>Bacilli</taxon>
        <taxon>Lactobacillales</taxon>
        <taxon>Streptococcaceae</taxon>
        <taxon>Streptococcus</taxon>
    </lineage>
</organism>
<accession>P65678</accession>
<accession>Q97RG1</accession>
<feature type="chain" id="PRO_0000184739" description="Pyrrolidone-carboxylate peptidase 1">
    <location>
        <begin position="1"/>
        <end position="214"/>
    </location>
</feature>
<feature type="active site" evidence="1">
    <location>
        <position position="78"/>
    </location>
</feature>
<feature type="active site" evidence="1">
    <location>
        <position position="141"/>
    </location>
</feature>
<feature type="active site" evidence="1">
    <location>
        <position position="165"/>
    </location>
</feature>
<keyword id="KW-0963">Cytoplasm</keyword>
<keyword id="KW-0378">Hydrolase</keyword>
<keyword id="KW-0645">Protease</keyword>
<keyword id="KW-1185">Reference proteome</keyword>
<keyword id="KW-0788">Thiol protease</keyword>
<gene>
    <name evidence="1" type="primary">pcp1</name>
    <name type="synonym">pcp</name>
    <name type="ordered locus">SP_0860</name>
</gene>
<evidence type="ECO:0000255" key="1">
    <source>
        <dbReference type="HAMAP-Rule" id="MF_00417"/>
    </source>
</evidence>